<reference key="1">
    <citation type="journal article" date="2003" name="Mol. Microbiol.">
        <title>An integrated analysis of the genome of the hyperthermophilic archaeon Pyrococcus abyssi.</title>
        <authorList>
            <person name="Cohen G.N."/>
            <person name="Barbe V."/>
            <person name="Flament D."/>
            <person name="Galperin M."/>
            <person name="Heilig R."/>
            <person name="Lecompte O."/>
            <person name="Poch O."/>
            <person name="Prieur D."/>
            <person name="Querellou J."/>
            <person name="Ripp R."/>
            <person name="Thierry J.-C."/>
            <person name="Van der Oost J."/>
            <person name="Weissenbach J."/>
            <person name="Zivanovic Y."/>
            <person name="Forterre P."/>
        </authorList>
    </citation>
    <scope>NUCLEOTIDE SEQUENCE [LARGE SCALE GENOMIC DNA]</scope>
    <source>
        <strain>GE5 / Orsay</strain>
    </source>
</reference>
<reference key="2">
    <citation type="journal article" date="2012" name="Curr. Microbiol.">
        <title>Re-annotation of two hyperthermophilic archaea Pyrococcus abyssi GE5 and Pyrococcus furiosus DSM 3638.</title>
        <authorList>
            <person name="Gao J."/>
            <person name="Wang J."/>
        </authorList>
    </citation>
    <scope>GENOME REANNOTATION</scope>
    <source>
        <strain>GE5 / Orsay</strain>
    </source>
</reference>
<accession>Q9UXU0</accession>
<accession>G8ZKV1</accession>
<protein>
    <recommendedName>
        <fullName>Trk system potassium uptake protein TrkA homolog</fullName>
        <shortName>K(+)-uptake protein TrkA homolog</shortName>
    </recommendedName>
</protein>
<evidence type="ECO:0000250" key="1"/>
<evidence type="ECO:0000255" key="2">
    <source>
        <dbReference type="PROSITE-ProRule" id="PRU00543"/>
    </source>
</evidence>
<evidence type="ECO:0000255" key="3">
    <source>
        <dbReference type="PROSITE-ProRule" id="PRU00544"/>
    </source>
</evidence>
<feature type="chain" id="PRO_0000148727" description="Trk system potassium uptake protein TrkA homolog">
    <location>
        <begin position="1"/>
        <end position="227"/>
    </location>
</feature>
<feature type="domain" description="RCK N-terminal" evidence="2">
    <location>
        <begin position="1"/>
        <end position="122"/>
    </location>
</feature>
<feature type="domain" description="RCK C-terminal" evidence="3">
    <location>
        <begin position="141"/>
        <end position="223"/>
    </location>
</feature>
<feature type="binding site" description="in other chain" evidence="1">
    <location>
        <begin position="7"/>
        <end position="11"/>
    </location>
    <ligand>
        <name>NAD(+)</name>
        <dbReference type="ChEBI" id="CHEBI:57540"/>
        <note>ligand shared between dimeric partners</note>
    </ligand>
</feature>
<feature type="binding site" description="in other chain" evidence="1">
    <location>
        <position position="30"/>
    </location>
    <ligand>
        <name>NAD(+)</name>
        <dbReference type="ChEBI" id="CHEBI:57540"/>
        <note>ligand shared between dimeric partners</note>
    </ligand>
</feature>
<feature type="binding site" description="in other chain" evidence="1">
    <location>
        <position position="51"/>
    </location>
    <ligand>
        <name>NAD(+)</name>
        <dbReference type="ChEBI" id="CHEBI:57540"/>
        <note>ligand shared between dimeric partners</note>
    </ligand>
</feature>
<feature type="binding site" description="in other chain" evidence="1">
    <location>
        <begin position="73"/>
        <end position="74"/>
    </location>
    <ligand>
        <name>NAD(+)</name>
        <dbReference type="ChEBI" id="CHEBI:57540"/>
        <note>ligand shared between dimeric partners</note>
    </ligand>
</feature>
<feature type="binding site" evidence="1">
    <location>
        <position position="98"/>
    </location>
    <ligand>
        <name>NAD(+)</name>
        <dbReference type="ChEBI" id="CHEBI:57540"/>
        <note>ligand shared between dimeric partners</note>
    </ligand>
</feature>
<proteinExistence type="inferred from homology"/>
<dbReference type="EMBL" id="AJ248288">
    <property type="protein sequence ID" value="CAB50673.1"/>
    <property type="molecule type" value="Genomic_DNA"/>
</dbReference>
<dbReference type="EMBL" id="HE613800">
    <property type="protein sequence ID" value="CCE71242.1"/>
    <property type="molecule type" value="Genomic_DNA"/>
</dbReference>
<dbReference type="PIR" id="C75029">
    <property type="entry name" value="C75029"/>
</dbReference>
<dbReference type="RefSeq" id="WP_010868887.1">
    <property type="nucleotide sequence ID" value="NC_000868.1"/>
</dbReference>
<dbReference type="SMR" id="Q9UXU0"/>
<dbReference type="STRING" id="272844.PAB1178"/>
<dbReference type="KEGG" id="pab:PAB1178"/>
<dbReference type="PATRIC" id="fig|272844.11.peg.1887"/>
<dbReference type="eggNOG" id="arCOG01957">
    <property type="taxonomic scope" value="Archaea"/>
</dbReference>
<dbReference type="HOGENOM" id="CLU_046525_2_2_2"/>
<dbReference type="OrthoDB" id="24929at2157"/>
<dbReference type="PhylomeDB" id="Q9UXU0"/>
<dbReference type="Proteomes" id="UP000000810">
    <property type="component" value="Chromosome"/>
</dbReference>
<dbReference type="Proteomes" id="UP000009139">
    <property type="component" value="Chromosome"/>
</dbReference>
<dbReference type="GO" id="GO:0005886">
    <property type="term" value="C:plasma membrane"/>
    <property type="evidence" value="ECO:0007669"/>
    <property type="project" value="InterPro"/>
</dbReference>
<dbReference type="GO" id="GO:0015079">
    <property type="term" value="F:potassium ion transmembrane transporter activity"/>
    <property type="evidence" value="ECO:0007669"/>
    <property type="project" value="InterPro"/>
</dbReference>
<dbReference type="Gene3D" id="3.40.50.720">
    <property type="entry name" value="NAD(P)-binding Rossmann-like Domain"/>
    <property type="match status" value="1"/>
</dbReference>
<dbReference type="Gene3D" id="3.30.70.1450">
    <property type="entry name" value="Regulator of K+ conductance, C-terminal domain"/>
    <property type="match status" value="1"/>
</dbReference>
<dbReference type="InterPro" id="IPR006036">
    <property type="entry name" value="K_uptake_TrkA"/>
</dbReference>
<dbReference type="InterPro" id="IPR036291">
    <property type="entry name" value="NAD(P)-bd_dom_sf"/>
</dbReference>
<dbReference type="InterPro" id="IPR006037">
    <property type="entry name" value="RCK_C"/>
</dbReference>
<dbReference type="InterPro" id="IPR036721">
    <property type="entry name" value="RCK_C_sf"/>
</dbReference>
<dbReference type="InterPro" id="IPR003148">
    <property type="entry name" value="RCK_N"/>
</dbReference>
<dbReference type="InterPro" id="IPR050721">
    <property type="entry name" value="Trk_Ktr_HKT_K-transport"/>
</dbReference>
<dbReference type="PANTHER" id="PTHR43833">
    <property type="entry name" value="POTASSIUM CHANNEL PROTEIN 2-RELATED-RELATED"/>
    <property type="match status" value="1"/>
</dbReference>
<dbReference type="PANTHER" id="PTHR43833:SF5">
    <property type="entry name" value="TRK SYSTEM POTASSIUM UPTAKE PROTEIN TRKA"/>
    <property type="match status" value="1"/>
</dbReference>
<dbReference type="Pfam" id="PF02080">
    <property type="entry name" value="TrkA_C"/>
    <property type="match status" value="1"/>
</dbReference>
<dbReference type="Pfam" id="PF02254">
    <property type="entry name" value="TrkA_N"/>
    <property type="match status" value="1"/>
</dbReference>
<dbReference type="PRINTS" id="PR00335">
    <property type="entry name" value="KUPTAKETRKA"/>
</dbReference>
<dbReference type="SUPFAM" id="SSF51735">
    <property type="entry name" value="NAD(P)-binding Rossmann-fold domains"/>
    <property type="match status" value="1"/>
</dbReference>
<dbReference type="SUPFAM" id="SSF116726">
    <property type="entry name" value="TrkA C-terminal domain-like"/>
    <property type="match status" value="1"/>
</dbReference>
<dbReference type="PROSITE" id="PS51202">
    <property type="entry name" value="RCK_C"/>
    <property type="match status" value="1"/>
</dbReference>
<dbReference type="PROSITE" id="PS51201">
    <property type="entry name" value="RCK_N"/>
    <property type="match status" value="1"/>
</dbReference>
<organism>
    <name type="scientific">Pyrococcus abyssi (strain GE5 / Orsay)</name>
    <dbReference type="NCBI Taxonomy" id="272844"/>
    <lineage>
        <taxon>Archaea</taxon>
        <taxon>Methanobacteriati</taxon>
        <taxon>Methanobacteriota</taxon>
        <taxon>Thermococci</taxon>
        <taxon>Thermococcales</taxon>
        <taxon>Thermococcaceae</taxon>
        <taxon>Pyrococcus</taxon>
    </lineage>
</organism>
<keyword id="KW-0406">Ion transport</keyword>
<keyword id="KW-0520">NAD</keyword>
<keyword id="KW-0630">Potassium</keyword>
<keyword id="KW-0633">Potassium transport</keyword>
<keyword id="KW-0813">Transport</keyword>
<comment type="function">
    <text evidence="1">Part of a potassium transport system.</text>
</comment>
<comment type="domain">
    <text evidence="1">The RCK N-terminal domain binds NAD and possibly other effectors. This is expected to cause a conformation change that regulates potassium transport (By similarity).</text>
</comment>
<sequence>MYIIIMGAGRIGTLVARMLESEGHDVAIIEMNRERAREISEYVSGLVIEGDATDQKVLENANIKNADAFAALTGRDDANILACILAKHLNPKIMTILRITDPGKKKIFEEVKELKRYFDIVVSPEDIAANYIFRTLVTPGFDRVLLPREGAEIIQFQVNEDCEVAGKPIKELNLPKDSLIIAVYDEKGNLVIPSGDTVIPKKGQVIIFAKNSALQDVKKIMEKKREE</sequence>
<gene>
    <name type="primary">trkA</name>
    <name type="ordered locus">PYRAB17680</name>
    <name type="ORF">PAB1178</name>
</gene>
<name>TRKA_PYRAB</name>